<accession>A7NVJ4</accession>
<accession>E0CR06</accession>
<proteinExistence type="evidence at transcript level"/>
<reference key="1">
    <citation type="submission" date="2003-01" db="EMBL/GenBank/DDBJ databases">
        <title>Transcriptional responses of Vitis vinifera to infection by the bacterial pathogen Xylella fastidiosa.</title>
        <authorList>
            <person name="Goes da Silva F."/>
            <person name="Lim H."/>
            <person name="Iandolino A."/>
            <person name="Baek J."/>
            <person name="Jones K."/>
            <person name="Walker M.A."/>
            <person name="Cook D.R."/>
        </authorList>
    </citation>
    <scope>NUCLEOTIDE SEQUENCE [MRNA]</scope>
    <source>
        <strain>cv. Cabernet Sauvignon</strain>
    </source>
</reference>
<reference key="2">
    <citation type="journal article" date="2007" name="Nature">
        <title>The grapevine genome sequence suggests ancestral hexaploidization in major angiosperm phyla.</title>
        <authorList>
            <person name="Jaillon O."/>
            <person name="Aury J.-M."/>
            <person name="Noel B."/>
            <person name="Policriti A."/>
            <person name="Clepet C."/>
            <person name="Casagrande A."/>
            <person name="Choisne N."/>
            <person name="Aubourg S."/>
            <person name="Vitulo N."/>
            <person name="Jubin C."/>
            <person name="Vezzi A."/>
            <person name="Legeai F."/>
            <person name="Hugueney P."/>
            <person name="Dasilva C."/>
            <person name="Horner D."/>
            <person name="Mica E."/>
            <person name="Jublot D."/>
            <person name="Poulain J."/>
            <person name="Bruyere C."/>
            <person name="Billault A."/>
            <person name="Segurens B."/>
            <person name="Gouyvenoux M."/>
            <person name="Ugarte E."/>
            <person name="Cattonaro F."/>
            <person name="Anthouard V."/>
            <person name="Vico V."/>
            <person name="Del Fabbro C."/>
            <person name="Alaux M."/>
            <person name="Di Gaspero G."/>
            <person name="Dumas V."/>
            <person name="Felice N."/>
            <person name="Paillard S."/>
            <person name="Juman I."/>
            <person name="Moroldo M."/>
            <person name="Scalabrin S."/>
            <person name="Canaguier A."/>
            <person name="Le Clainche I."/>
            <person name="Malacrida G."/>
            <person name="Durand E."/>
            <person name="Pesole G."/>
            <person name="Laucou V."/>
            <person name="Chatelet P."/>
            <person name="Merdinoglu D."/>
            <person name="Delledonne M."/>
            <person name="Pezzotti M."/>
            <person name="Lecharny A."/>
            <person name="Scarpelli C."/>
            <person name="Artiguenave F."/>
            <person name="Pe M.E."/>
            <person name="Valle G."/>
            <person name="Morgante M."/>
            <person name="Caboche M."/>
            <person name="Adam-Blondon A.-F."/>
            <person name="Weissenbach J."/>
            <person name="Quetier F."/>
            <person name="Wincker P."/>
        </authorList>
    </citation>
    <scope>NUCLEOTIDE SEQUENCE [LARGE SCALE GENOMIC DNA]</scope>
    <source>
        <strain>cv. Pinot noir / PN40024</strain>
    </source>
</reference>
<dbReference type="EC" id="7.1.1.-" evidence="5"/>
<dbReference type="EMBL" id="CA815794">
    <property type="status" value="NOT_ANNOTATED_CDS"/>
    <property type="molecule type" value="mRNA"/>
</dbReference>
<dbReference type="EMBL" id="FN595227">
    <property type="protein sequence ID" value="CBI18960.3"/>
    <property type="molecule type" value="Genomic_DNA"/>
</dbReference>
<dbReference type="RefSeq" id="XP_002285884.1">
    <property type="nucleotide sequence ID" value="XM_002285848.3"/>
</dbReference>
<dbReference type="SMR" id="A7NVJ4"/>
<dbReference type="FunCoup" id="A7NVJ4">
    <property type="interactions" value="1005"/>
</dbReference>
<dbReference type="STRING" id="29760.A7NVJ4"/>
<dbReference type="PaxDb" id="29760-VIT_18s0001g01660.t01"/>
<dbReference type="EnsemblPlants" id="Vitvi18g00216_t001">
    <property type="protein sequence ID" value="Vitvi18g00216_P001"/>
    <property type="gene ID" value="Vitvi18g00216"/>
</dbReference>
<dbReference type="Gramene" id="Vitvi18g00216_t001">
    <property type="protein sequence ID" value="Vitvi18g00216_P001"/>
    <property type="gene ID" value="Vitvi18g00216"/>
</dbReference>
<dbReference type="eggNOG" id="ENOG502QUN1">
    <property type="taxonomic scope" value="Eukaryota"/>
</dbReference>
<dbReference type="HOGENOM" id="CLU_089187_0_0_1"/>
<dbReference type="InParanoid" id="A7NVJ4"/>
<dbReference type="OMA" id="YMASTHF"/>
<dbReference type="OrthoDB" id="2013483at2759"/>
<dbReference type="Proteomes" id="UP000009183">
    <property type="component" value="Chromosome 18"/>
</dbReference>
<dbReference type="GO" id="GO:0009535">
    <property type="term" value="C:chloroplast thylakoid membrane"/>
    <property type="evidence" value="ECO:0007669"/>
    <property type="project" value="UniProtKB-SubCell"/>
</dbReference>
<dbReference type="GO" id="GO:0016655">
    <property type="term" value="F:oxidoreductase activity, acting on NAD(P)H, quinone or similar compound as acceptor"/>
    <property type="evidence" value="ECO:0007669"/>
    <property type="project" value="InterPro"/>
</dbReference>
<dbReference type="GO" id="GO:0048038">
    <property type="term" value="F:quinone binding"/>
    <property type="evidence" value="ECO:0007669"/>
    <property type="project" value="UniProtKB-KW"/>
</dbReference>
<dbReference type="InterPro" id="IPR018922">
    <property type="entry name" value="NdhM"/>
</dbReference>
<dbReference type="PANTHER" id="PTHR36900">
    <property type="entry name" value="NAD(P)H-QUINONE OXIDOREDUCTASE SUBUNIT M, CHLOROPLASTIC"/>
    <property type="match status" value="1"/>
</dbReference>
<dbReference type="PANTHER" id="PTHR36900:SF1">
    <property type="entry name" value="NAD(P)H-QUINONE OXIDOREDUCTASE SUBUNIT M, CHLOROPLASTIC"/>
    <property type="match status" value="1"/>
</dbReference>
<dbReference type="Pfam" id="PF10664">
    <property type="entry name" value="NdhM"/>
    <property type="match status" value="1"/>
</dbReference>
<keyword id="KW-0150">Chloroplast</keyword>
<keyword id="KW-0472">Membrane</keyword>
<keyword id="KW-0520">NAD</keyword>
<keyword id="KW-0521">NADP</keyword>
<keyword id="KW-0934">Plastid</keyword>
<keyword id="KW-0618">Plastoquinone</keyword>
<keyword id="KW-0874">Quinone</keyword>
<keyword id="KW-1185">Reference proteome</keyword>
<keyword id="KW-0793">Thylakoid</keyword>
<keyword id="KW-0809">Transit peptide</keyword>
<keyword id="KW-1278">Translocase</keyword>
<keyword id="KW-0813">Transport</keyword>
<sequence>MAATSSYTACTKFSMLGWIGGKRELRKRRAFFISAQQQAEVEESQQVNAQEEEQEKMKQQGKQKLPRPVEPQVNVKSKNMSREYGGQWLSSVTRHVRIYAAYIDPVTCEFDQTQMDKLTLILDPTNEFVWTSETCNKVYAYFQELVDHYEGAPLTEYTLRLIGSDIEHYIRKLLYDGEIKYNMNARVLNFSMGKPRILFNDGLPQNVQ</sequence>
<protein>
    <recommendedName>
        <fullName evidence="5">NAD(P)H-quinone oxidoreductase subunit M, chloroplastic</fullName>
        <ecNumber evidence="5">7.1.1.-</ecNumber>
    </recommendedName>
    <alternativeName>
        <fullName evidence="5">NAD(P)H dehydrogenase subunit M</fullName>
        <shortName evidence="5">NDH subunit M</shortName>
        <shortName evidence="1">NDH-M</shortName>
    </alternativeName>
    <alternativeName>
        <fullName evidence="5">NADH-plastoquinone oxidoreductase subunit M</fullName>
    </alternativeName>
</protein>
<feature type="transit peptide" description="Chloroplast" evidence="3">
    <location>
        <begin position="1"/>
        <end position="21"/>
    </location>
</feature>
<feature type="chain" id="PRO_0000352665" description="NAD(P)H-quinone oxidoreductase subunit M, chloroplastic">
    <location>
        <begin position="22"/>
        <end position="208"/>
    </location>
</feature>
<feature type="region of interest" description="Disordered" evidence="4">
    <location>
        <begin position="37"/>
        <end position="70"/>
    </location>
</feature>
<feature type="compositionally biased region" description="Low complexity" evidence="4">
    <location>
        <begin position="37"/>
        <end position="49"/>
    </location>
</feature>
<feature type="sequence conflict" description="In Ref. 1; CA815794." evidence="5" ref="1">
    <original>E</original>
    <variation>G</variation>
    <location>
        <position position="109"/>
    </location>
</feature>
<feature type="sequence conflict" description="In Ref. 1; CA815794." evidence="5" ref="1">
    <original>G</original>
    <variation>D</variation>
    <location>
        <position position="202"/>
    </location>
</feature>
<gene>
    <name evidence="5" type="primary">ndhM</name>
    <name evidence="1" type="synonym">NDH-M</name>
    <name type="ordered locus">VIT_18s0001g01660</name>
    <name type="ORF">GSVIVT00015457001</name>
    <name type="ORF">LOC100264425</name>
</gene>
<comment type="function">
    <text evidence="5">NDH shuttles electrons from NAD(P)H:plastoquinone, via FMN and iron-sulfur (Fe-S) centers, to quinones in the photosynthetic chain and possibly in a chloroplast respiratory chain. The immediate electron acceptor for the enzyme in this species is believed to be plastoquinone. Couples the redox reaction to proton translocation, and thus conserves the redox energy in a proton gradient.</text>
</comment>
<comment type="catalytic activity">
    <reaction evidence="5">
        <text>a plastoquinone + NADH + (n+1) H(+)(in) = a plastoquinol + NAD(+) + n H(+)(out)</text>
        <dbReference type="Rhea" id="RHEA:42608"/>
        <dbReference type="Rhea" id="RHEA-COMP:9561"/>
        <dbReference type="Rhea" id="RHEA-COMP:9562"/>
        <dbReference type="ChEBI" id="CHEBI:15378"/>
        <dbReference type="ChEBI" id="CHEBI:17757"/>
        <dbReference type="ChEBI" id="CHEBI:57540"/>
        <dbReference type="ChEBI" id="CHEBI:57945"/>
        <dbReference type="ChEBI" id="CHEBI:62192"/>
    </reaction>
</comment>
<comment type="catalytic activity">
    <reaction evidence="5">
        <text>a plastoquinone + NADPH + (n+1) H(+)(in) = a plastoquinol + NADP(+) + n H(+)(out)</text>
        <dbReference type="Rhea" id="RHEA:42612"/>
        <dbReference type="Rhea" id="RHEA-COMP:9561"/>
        <dbReference type="Rhea" id="RHEA-COMP:9562"/>
        <dbReference type="ChEBI" id="CHEBI:15378"/>
        <dbReference type="ChEBI" id="CHEBI:17757"/>
        <dbReference type="ChEBI" id="CHEBI:57783"/>
        <dbReference type="ChEBI" id="CHEBI:58349"/>
        <dbReference type="ChEBI" id="CHEBI:62192"/>
    </reaction>
</comment>
<comment type="subunit">
    <text evidence="1">Part of the chloroplast NDH complex, composed of a mixture of chloroplast and nucleus encoded subunits. Component of the NDH subcomplex A, at least composed of ndhH, ndhI, ndhJ, ndhK, ndhL, ndhM, ndhN and ndhO.</text>
</comment>
<comment type="subcellular location">
    <subcellularLocation>
        <location evidence="2">Plastid</location>
        <location evidence="2">Chloroplast thylakoid membrane</location>
        <topology evidence="5">Peripheral membrane protein</topology>
        <orientation evidence="5">Stromal side</orientation>
    </subcellularLocation>
</comment>
<comment type="similarity">
    <text evidence="5">Belongs to the NDH complex subunit M family.</text>
</comment>
<organism>
    <name type="scientific">Vitis vinifera</name>
    <name type="common">Grape</name>
    <dbReference type="NCBI Taxonomy" id="29760"/>
    <lineage>
        <taxon>Eukaryota</taxon>
        <taxon>Viridiplantae</taxon>
        <taxon>Streptophyta</taxon>
        <taxon>Embryophyta</taxon>
        <taxon>Tracheophyta</taxon>
        <taxon>Spermatophyta</taxon>
        <taxon>Magnoliopsida</taxon>
        <taxon>eudicotyledons</taxon>
        <taxon>Gunneridae</taxon>
        <taxon>Pentapetalae</taxon>
        <taxon>rosids</taxon>
        <taxon>Vitales</taxon>
        <taxon>Vitaceae</taxon>
        <taxon>Viteae</taxon>
        <taxon>Vitis</taxon>
    </lineage>
</organism>
<evidence type="ECO:0000250" key="1">
    <source>
        <dbReference type="UniProtKB" id="Q2V2S7"/>
    </source>
</evidence>
<evidence type="ECO:0000250" key="2">
    <source>
        <dbReference type="UniProtKB" id="Q9CAC5"/>
    </source>
</evidence>
<evidence type="ECO:0000255" key="3"/>
<evidence type="ECO:0000256" key="4">
    <source>
        <dbReference type="SAM" id="MobiDB-lite"/>
    </source>
</evidence>
<evidence type="ECO:0000305" key="5"/>
<name>NDHM_VITVI</name>